<sequence>MPREQKQVRELQEGSYVMMDSSPCKINHYSTAKPGKHGSAKARVEGKGVFDEKKRSLSQPVDAKVWVPIIQRKQGQVVSVSGDDAQVMDLDTYETFTMRIPEGEDFTSDDNIEYLEYEGQRKVVG</sequence>
<proteinExistence type="inferred from homology"/>
<gene>
    <name type="primary">eIF5A</name>
    <name type="ordered locus">Hlac_1578</name>
</gene>
<protein>
    <recommendedName>
        <fullName evidence="1">Translation initiation factor 5A</fullName>
    </recommendedName>
    <alternativeName>
        <fullName evidence="1">Hypusine-containing protein</fullName>
    </alternativeName>
    <alternativeName>
        <fullName evidence="1">eIF-5A</fullName>
    </alternativeName>
</protein>
<comment type="function">
    <text evidence="1">Functions by promoting the formation of the first peptide bond.</text>
</comment>
<comment type="subcellular location">
    <subcellularLocation>
        <location evidence="1">Cytoplasm</location>
    </subcellularLocation>
</comment>
<comment type="similarity">
    <text evidence="1">Belongs to the eIF-5A family.</text>
</comment>
<feature type="chain" id="PRO_1000118421" description="Translation initiation factor 5A">
    <location>
        <begin position="1"/>
        <end position="125"/>
    </location>
</feature>
<feature type="modified residue" description="Hypusine" evidence="1">
    <location>
        <position position="36"/>
    </location>
</feature>
<keyword id="KW-0963">Cytoplasm</keyword>
<keyword id="KW-0385">Hypusine</keyword>
<keyword id="KW-0396">Initiation factor</keyword>
<keyword id="KW-0648">Protein biosynthesis</keyword>
<keyword id="KW-1185">Reference proteome</keyword>
<reference key="1">
    <citation type="journal article" date="2016" name="Stand. Genomic Sci.">
        <title>Complete genome sequence of the Antarctic Halorubrum lacusprofundi type strain ACAM 34.</title>
        <authorList>
            <person name="Anderson I.J."/>
            <person name="DasSarma P."/>
            <person name="Lucas S."/>
            <person name="Copeland A."/>
            <person name="Lapidus A."/>
            <person name="Del Rio T.G."/>
            <person name="Tice H."/>
            <person name="Dalin E."/>
            <person name="Bruce D.C."/>
            <person name="Goodwin L."/>
            <person name="Pitluck S."/>
            <person name="Sims D."/>
            <person name="Brettin T.S."/>
            <person name="Detter J.C."/>
            <person name="Han C.S."/>
            <person name="Larimer F."/>
            <person name="Hauser L."/>
            <person name="Land M."/>
            <person name="Ivanova N."/>
            <person name="Richardson P."/>
            <person name="Cavicchioli R."/>
            <person name="DasSarma S."/>
            <person name="Woese C.R."/>
            <person name="Kyrpides N.C."/>
        </authorList>
    </citation>
    <scope>NUCLEOTIDE SEQUENCE [LARGE SCALE GENOMIC DNA]</scope>
    <source>
        <strain>ATCC 49239 / DSM 5036 / JCM 8891 / ACAM 34</strain>
    </source>
</reference>
<name>IF5A_HALLT</name>
<evidence type="ECO:0000255" key="1">
    <source>
        <dbReference type="HAMAP-Rule" id="MF_00085"/>
    </source>
</evidence>
<dbReference type="EMBL" id="CP001365">
    <property type="protein sequence ID" value="ACM57164.1"/>
    <property type="molecule type" value="Genomic_DNA"/>
</dbReference>
<dbReference type="RefSeq" id="WP_015910304.1">
    <property type="nucleotide sequence ID" value="NC_012029.1"/>
</dbReference>
<dbReference type="SMR" id="B9LP76"/>
<dbReference type="GeneID" id="7401511"/>
<dbReference type="KEGG" id="hla:Hlac_1578"/>
<dbReference type="eggNOG" id="arCOG04277">
    <property type="taxonomic scope" value="Archaea"/>
</dbReference>
<dbReference type="HOGENOM" id="CLU_102600_3_0_2"/>
<dbReference type="Proteomes" id="UP000000740">
    <property type="component" value="Chromosome 1"/>
</dbReference>
<dbReference type="GO" id="GO:0005737">
    <property type="term" value="C:cytoplasm"/>
    <property type="evidence" value="ECO:0007669"/>
    <property type="project" value="UniProtKB-SubCell"/>
</dbReference>
<dbReference type="GO" id="GO:0043022">
    <property type="term" value="F:ribosome binding"/>
    <property type="evidence" value="ECO:0007669"/>
    <property type="project" value="InterPro"/>
</dbReference>
<dbReference type="GO" id="GO:0003723">
    <property type="term" value="F:RNA binding"/>
    <property type="evidence" value="ECO:0007669"/>
    <property type="project" value="InterPro"/>
</dbReference>
<dbReference type="GO" id="GO:0003746">
    <property type="term" value="F:translation elongation factor activity"/>
    <property type="evidence" value="ECO:0007669"/>
    <property type="project" value="InterPro"/>
</dbReference>
<dbReference type="GO" id="GO:0003743">
    <property type="term" value="F:translation initiation factor activity"/>
    <property type="evidence" value="ECO:0007669"/>
    <property type="project" value="UniProtKB-UniRule"/>
</dbReference>
<dbReference type="GO" id="GO:0045901">
    <property type="term" value="P:positive regulation of translational elongation"/>
    <property type="evidence" value="ECO:0007669"/>
    <property type="project" value="InterPro"/>
</dbReference>
<dbReference type="GO" id="GO:0045905">
    <property type="term" value="P:positive regulation of translational termination"/>
    <property type="evidence" value="ECO:0007669"/>
    <property type="project" value="InterPro"/>
</dbReference>
<dbReference type="CDD" id="cd04467">
    <property type="entry name" value="S1_aIF5A"/>
    <property type="match status" value="1"/>
</dbReference>
<dbReference type="FunFam" id="2.30.30.30:FF:000038">
    <property type="entry name" value="Translation initiation factor 5A"/>
    <property type="match status" value="1"/>
</dbReference>
<dbReference type="Gene3D" id="2.30.30.30">
    <property type="match status" value="1"/>
</dbReference>
<dbReference type="Gene3D" id="2.40.50.140">
    <property type="entry name" value="Nucleic acid-binding proteins"/>
    <property type="match status" value="1"/>
</dbReference>
<dbReference type="HAMAP" id="MF_00085">
    <property type="entry name" value="eIF_5A"/>
    <property type="match status" value="1"/>
</dbReference>
<dbReference type="InterPro" id="IPR001884">
    <property type="entry name" value="IF5A-like"/>
</dbReference>
<dbReference type="InterPro" id="IPR048670">
    <property type="entry name" value="IF5A-like_N"/>
</dbReference>
<dbReference type="InterPro" id="IPR012340">
    <property type="entry name" value="NA-bd_OB-fold"/>
</dbReference>
<dbReference type="InterPro" id="IPR014722">
    <property type="entry name" value="Rib_uL2_dom2"/>
</dbReference>
<dbReference type="InterPro" id="IPR019769">
    <property type="entry name" value="Trans_elong_IF5A_hypusine_site"/>
</dbReference>
<dbReference type="InterPro" id="IPR022847">
    <property type="entry name" value="Transl_elong_IF5A_arc"/>
</dbReference>
<dbReference type="InterPro" id="IPR020189">
    <property type="entry name" value="Transl_elong_IF5A_C"/>
</dbReference>
<dbReference type="InterPro" id="IPR008991">
    <property type="entry name" value="Translation_prot_SH3-like_sf"/>
</dbReference>
<dbReference type="NCBIfam" id="TIGR00037">
    <property type="entry name" value="eIF_5A"/>
    <property type="match status" value="1"/>
</dbReference>
<dbReference type="NCBIfam" id="NF003076">
    <property type="entry name" value="PRK03999.1"/>
    <property type="match status" value="1"/>
</dbReference>
<dbReference type="PANTHER" id="PTHR11673">
    <property type="entry name" value="TRANSLATION INITIATION FACTOR 5A FAMILY MEMBER"/>
    <property type="match status" value="1"/>
</dbReference>
<dbReference type="Pfam" id="PF21485">
    <property type="entry name" value="IF5A-like_N"/>
    <property type="match status" value="1"/>
</dbReference>
<dbReference type="PIRSF" id="PIRSF003025">
    <property type="entry name" value="eIF5A"/>
    <property type="match status" value="1"/>
</dbReference>
<dbReference type="SMART" id="SM01376">
    <property type="entry name" value="eIF-5a"/>
    <property type="match status" value="1"/>
</dbReference>
<dbReference type="SUPFAM" id="SSF50249">
    <property type="entry name" value="Nucleic acid-binding proteins"/>
    <property type="match status" value="1"/>
</dbReference>
<dbReference type="SUPFAM" id="SSF50104">
    <property type="entry name" value="Translation proteins SH3-like domain"/>
    <property type="match status" value="1"/>
</dbReference>
<dbReference type="PROSITE" id="PS00302">
    <property type="entry name" value="IF5A_HYPUSINE"/>
    <property type="match status" value="1"/>
</dbReference>
<organism>
    <name type="scientific">Halorubrum lacusprofundi (strain ATCC 49239 / DSM 5036 / JCM 8891 / ACAM 34)</name>
    <dbReference type="NCBI Taxonomy" id="416348"/>
    <lineage>
        <taxon>Archaea</taxon>
        <taxon>Methanobacteriati</taxon>
        <taxon>Methanobacteriota</taxon>
        <taxon>Stenosarchaea group</taxon>
        <taxon>Halobacteria</taxon>
        <taxon>Halobacteriales</taxon>
        <taxon>Haloferacaceae</taxon>
        <taxon>Halorubrum</taxon>
    </lineage>
</organism>
<accession>B9LP76</accession>